<reference key="1">
    <citation type="journal article" date="2009" name="BMC Genomics">
        <title>Analysis of the Rickettsia africae genome reveals that virulence acquisition in Rickettsia species may be explained by genome reduction.</title>
        <authorList>
            <person name="Fournier P.-E."/>
            <person name="El Karkouri K."/>
            <person name="Leroy Q."/>
            <person name="Robert C."/>
            <person name="Giumelli B."/>
            <person name="Renesto P."/>
            <person name="Socolovschi C."/>
            <person name="Parola P."/>
            <person name="Audic S."/>
            <person name="Raoult D."/>
        </authorList>
    </citation>
    <scope>NUCLEOTIDE SEQUENCE [LARGE SCALE GENOMIC DNA]</scope>
    <source>
        <strain>ESF-5</strain>
    </source>
</reference>
<comment type="function">
    <text evidence="1">Required for accurate and efficient protein synthesis under certain stress conditions. May act as a fidelity factor of the translation reaction, by catalyzing a one-codon backward translocation of tRNAs on improperly translocated ribosomes. Back-translocation proceeds from a post-translocation (POST) complex to a pre-translocation (PRE) complex, thus giving elongation factor G a second chance to translocate the tRNAs correctly. Binds to ribosomes in a GTP-dependent manner.</text>
</comment>
<comment type="catalytic activity">
    <reaction evidence="1">
        <text>GTP + H2O = GDP + phosphate + H(+)</text>
        <dbReference type="Rhea" id="RHEA:19669"/>
        <dbReference type="ChEBI" id="CHEBI:15377"/>
        <dbReference type="ChEBI" id="CHEBI:15378"/>
        <dbReference type="ChEBI" id="CHEBI:37565"/>
        <dbReference type="ChEBI" id="CHEBI:43474"/>
        <dbReference type="ChEBI" id="CHEBI:58189"/>
        <dbReference type="EC" id="3.6.5.n1"/>
    </reaction>
</comment>
<comment type="subcellular location">
    <subcellularLocation>
        <location evidence="1">Cell inner membrane</location>
        <topology evidence="1">Peripheral membrane protein</topology>
        <orientation evidence="1">Cytoplasmic side</orientation>
    </subcellularLocation>
</comment>
<comment type="similarity">
    <text evidence="1">Belongs to the TRAFAC class translation factor GTPase superfamily. Classic translation factor GTPase family. LepA subfamily.</text>
</comment>
<dbReference type="EC" id="3.6.5.n1" evidence="1"/>
<dbReference type="EMBL" id="CP001612">
    <property type="protein sequence ID" value="ACP53283.1"/>
    <property type="molecule type" value="Genomic_DNA"/>
</dbReference>
<dbReference type="RefSeq" id="WP_012719533.1">
    <property type="nucleotide sequence ID" value="NC_012633.1"/>
</dbReference>
<dbReference type="SMR" id="C3PMX3"/>
<dbReference type="KEGG" id="raf:RAF_ORF0344"/>
<dbReference type="HOGENOM" id="CLU_009995_3_3_5"/>
<dbReference type="Proteomes" id="UP000002305">
    <property type="component" value="Chromosome"/>
</dbReference>
<dbReference type="GO" id="GO:0005886">
    <property type="term" value="C:plasma membrane"/>
    <property type="evidence" value="ECO:0007669"/>
    <property type="project" value="UniProtKB-SubCell"/>
</dbReference>
<dbReference type="GO" id="GO:0005525">
    <property type="term" value="F:GTP binding"/>
    <property type="evidence" value="ECO:0007669"/>
    <property type="project" value="UniProtKB-UniRule"/>
</dbReference>
<dbReference type="GO" id="GO:0003924">
    <property type="term" value="F:GTPase activity"/>
    <property type="evidence" value="ECO:0007669"/>
    <property type="project" value="UniProtKB-UniRule"/>
</dbReference>
<dbReference type="GO" id="GO:0097216">
    <property type="term" value="F:guanosine tetraphosphate binding"/>
    <property type="evidence" value="ECO:0007669"/>
    <property type="project" value="UniProtKB-ARBA"/>
</dbReference>
<dbReference type="GO" id="GO:0043022">
    <property type="term" value="F:ribosome binding"/>
    <property type="evidence" value="ECO:0007669"/>
    <property type="project" value="UniProtKB-UniRule"/>
</dbReference>
<dbReference type="GO" id="GO:0003746">
    <property type="term" value="F:translation elongation factor activity"/>
    <property type="evidence" value="ECO:0007669"/>
    <property type="project" value="UniProtKB-UniRule"/>
</dbReference>
<dbReference type="GO" id="GO:0045727">
    <property type="term" value="P:positive regulation of translation"/>
    <property type="evidence" value="ECO:0007669"/>
    <property type="project" value="UniProtKB-UniRule"/>
</dbReference>
<dbReference type="CDD" id="cd03699">
    <property type="entry name" value="EF4_II"/>
    <property type="match status" value="1"/>
</dbReference>
<dbReference type="CDD" id="cd16260">
    <property type="entry name" value="EF4_III"/>
    <property type="match status" value="1"/>
</dbReference>
<dbReference type="CDD" id="cd01890">
    <property type="entry name" value="LepA"/>
    <property type="match status" value="1"/>
</dbReference>
<dbReference type="CDD" id="cd03709">
    <property type="entry name" value="lepA_C"/>
    <property type="match status" value="1"/>
</dbReference>
<dbReference type="FunFam" id="3.40.50.300:FF:000078">
    <property type="entry name" value="Elongation factor 4"/>
    <property type="match status" value="1"/>
</dbReference>
<dbReference type="FunFam" id="2.40.30.10:FF:000015">
    <property type="entry name" value="Translation factor GUF1, mitochondrial"/>
    <property type="match status" value="1"/>
</dbReference>
<dbReference type="FunFam" id="3.30.70.240:FF:000007">
    <property type="entry name" value="Translation factor GUF1, mitochondrial"/>
    <property type="match status" value="1"/>
</dbReference>
<dbReference type="FunFam" id="3.30.70.2570:FF:000001">
    <property type="entry name" value="Translation factor GUF1, mitochondrial"/>
    <property type="match status" value="1"/>
</dbReference>
<dbReference type="FunFam" id="3.30.70.870:FF:000004">
    <property type="entry name" value="Translation factor GUF1, mitochondrial"/>
    <property type="match status" value="1"/>
</dbReference>
<dbReference type="Gene3D" id="3.30.70.240">
    <property type="match status" value="1"/>
</dbReference>
<dbReference type="Gene3D" id="3.30.70.2570">
    <property type="entry name" value="Elongation factor 4, C-terminal domain"/>
    <property type="match status" value="1"/>
</dbReference>
<dbReference type="Gene3D" id="3.30.70.870">
    <property type="entry name" value="Elongation Factor G (Translational Gtpase), domain 3"/>
    <property type="match status" value="1"/>
</dbReference>
<dbReference type="Gene3D" id="3.40.50.300">
    <property type="entry name" value="P-loop containing nucleotide triphosphate hydrolases"/>
    <property type="match status" value="1"/>
</dbReference>
<dbReference type="Gene3D" id="2.40.30.10">
    <property type="entry name" value="Translation factors"/>
    <property type="match status" value="1"/>
</dbReference>
<dbReference type="HAMAP" id="MF_00071">
    <property type="entry name" value="LepA"/>
    <property type="match status" value="1"/>
</dbReference>
<dbReference type="InterPro" id="IPR006297">
    <property type="entry name" value="EF-4"/>
</dbReference>
<dbReference type="InterPro" id="IPR035647">
    <property type="entry name" value="EFG_III/V"/>
</dbReference>
<dbReference type="InterPro" id="IPR000640">
    <property type="entry name" value="EFG_V-like"/>
</dbReference>
<dbReference type="InterPro" id="IPR004161">
    <property type="entry name" value="EFTu-like_2"/>
</dbReference>
<dbReference type="InterPro" id="IPR031157">
    <property type="entry name" value="G_TR_CS"/>
</dbReference>
<dbReference type="InterPro" id="IPR038363">
    <property type="entry name" value="LepA_C_sf"/>
</dbReference>
<dbReference type="InterPro" id="IPR013842">
    <property type="entry name" value="LepA_CTD"/>
</dbReference>
<dbReference type="InterPro" id="IPR035654">
    <property type="entry name" value="LepA_IV"/>
</dbReference>
<dbReference type="InterPro" id="IPR027417">
    <property type="entry name" value="P-loop_NTPase"/>
</dbReference>
<dbReference type="InterPro" id="IPR005225">
    <property type="entry name" value="Small_GTP-bd"/>
</dbReference>
<dbReference type="InterPro" id="IPR000795">
    <property type="entry name" value="T_Tr_GTP-bd_dom"/>
</dbReference>
<dbReference type="NCBIfam" id="TIGR01393">
    <property type="entry name" value="lepA"/>
    <property type="match status" value="1"/>
</dbReference>
<dbReference type="NCBIfam" id="TIGR00231">
    <property type="entry name" value="small_GTP"/>
    <property type="match status" value="1"/>
</dbReference>
<dbReference type="PANTHER" id="PTHR43512:SF4">
    <property type="entry name" value="TRANSLATION FACTOR GUF1 HOMOLOG, CHLOROPLASTIC"/>
    <property type="match status" value="1"/>
</dbReference>
<dbReference type="PANTHER" id="PTHR43512">
    <property type="entry name" value="TRANSLATION FACTOR GUF1-RELATED"/>
    <property type="match status" value="1"/>
</dbReference>
<dbReference type="Pfam" id="PF00679">
    <property type="entry name" value="EFG_C"/>
    <property type="match status" value="1"/>
</dbReference>
<dbReference type="Pfam" id="PF00009">
    <property type="entry name" value="GTP_EFTU"/>
    <property type="match status" value="1"/>
</dbReference>
<dbReference type="Pfam" id="PF03144">
    <property type="entry name" value="GTP_EFTU_D2"/>
    <property type="match status" value="1"/>
</dbReference>
<dbReference type="Pfam" id="PF06421">
    <property type="entry name" value="LepA_C"/>
    <property type="match status" value="1"/>
</dbReference>
<dbReference type="PRINTS" id="PR00315">
    <property type="entry name" value="ELONGATNFCT"/>
</dbReference>
<dbReference type="SMART" id="SM00838">
    <property type="entry name" value="EFG_C"/>
    <property type="match status" value="1"/>
</dbReference>
<dbReference type="SUPFAM" id="SSF54980">
    <property type="entry name" value="EF-G C-terminal domain-like"/>
    <property type="match status" value="2"/>
</dbReference>
<dbReference type="SUPFAM" id="SSF52540">
    <property type="entry name" value="P-loop containing nucleoside triphosphate hydrolases"/>
    <property type="match status" value="1"/>
</dbReference>
<dbReference type="PROSITE" id="PS00301">
    <property type="entry name" value="G_TR_1"/>
    <property type="match status" value="1"/>
</dbReference>
<dbReference type="PROSITE" id="PS51722">
    <property type="entry name" value="G_TR_2"/>
    <property type="match status" value="1"/>
</dbReference>
<proteinExistence type="inferred from homology"/>
<gene>
    <name evidence="1" type="primary">lepA</name>
    <name type="ordered locus">RAF_ORF0344</name>
</gene>
<accession>C3PMX3</accession>
<sequence>MNHQKYIRNFSIIAHIDHGKSTLADRLIEHCGGLQAREMSQQVLDSMDIEKERGITIKAQTVRLVYKAKDGNTYYLNLMDTPGHVDFAYEVSRSLAACEGSLLVVDSTQGVAAQTLANVYQAIENDHEIVLVLNKLDLPASEPEQVKQQIEDIIGIDTSDAVLISAKSGIGIDLVLEAIVNKLPPPKESSSDILKALLVDSWYDQYLGVVILVRVIDGYLRKNMRIKMMATNSVYTVENVGYFTPKKHISDVLHAGEIGFFTAAIKQVADCKVGDTITDEKKPCEQALPGFKPNLPVVFCGLYPTDSSEFEHLKDSLAKLRLNDASFEYEMESSSALGVGFRCGFLGLLHLEIIQERLSREFDLDLITTAPSVVYKIHMQDGENLEIHNPADLPNLQKIESMEEPWIKATIMVPDEFLGAVLSLCTEKRGMQLDHSYIANRAKIIYKLPLNEIVYDFYDRLKSCSKGYASFEWQMDVYEPSELVKLGILVNAEVVDALSTIVHRSRAEQRGRALCVRLKDLIPRQQIDIAIQASIGSRIIARETIKALRKDVLSKCYGGDISRKRKLLEKQKAGKKRMRQYGNIEIPQSAFIAALKIGDE</sequence>
<protein>
    <recommendedName>
        <fullName evidence="1">Elongation factor 4</fullName>
        <shortName evidence="1">EF-4</shortName>
        <ecNumber evidence="1">3.6.5.n1</ecNumber>
    </recommendedName>
    <alternativeName>
        <fullName evidence="1">Ribosomal back-translocase LepA</fullName>
    </alternativeName>
</protein>
<feature type="chain" id="PRO_1000202458" description="Elongation factor 4">
    <location>
        <begin position="1"/>
        <end position="600"/>
    </location>
</feature>
<feature type="domain" description="tr-type G">
    <location>
        <begin position="5"/>
        <end position="187"/>
    </location>
</feature>
<feature type="binding site" evidence="1">
    <location>
        <begin position="17"/>
        <end position="22"/>
    </location>
    <ligand>
        <name>GTP</name>
        <dbReference type="ChEBI" id="CHEBI:37565"/>
    </ligand>
</feature>
<feature type="binding site" evidence="1">
    <location>
        <begin position="134"/>
        <end position="137"/>
    </location>
    <ligand>
        <name>GTP</name>
        <dbReference type="ChEBI" id="CHEBI:37565"/>
    </ligand>
</feature>
<keyword id="KW-0997">Cell inner membrane</keyword>
<keyword id="KW-1003">Cell membrane</keyword>
<keyword id="KW-0342">GTP-binding</keyword>
<keyword id="KW-0378">Hydrolase</keyword>
<keyword id="KW-0472">Membrane</keyword>
<keyword id="KW-0547">Nucleotide-binding</keyword>
<keyword id="KW-0648">Protein biosynthesis</keyword>
<name>LEPA_RICAE</name>
<evidence type="ECO:0000255" key="1">
    <source>
        <dbReference type="HAMAP-Rule" id="MF_00071"/>
    </source>
</evidence>
<organism>
    <name type="scientific">Rickettsia africae (strain ESF-5)</name>
    <dbReference type="NCBI Taxonomy" id="347255"/>
    <lineage>
        <taxon>Bacteria</taxon>
        <taxon>Pseudomonadati</taxon>
        <taxon>Pseudomonadota</taxon>
        <taxon>Alphaproteobacteria</taxon>
        <taxon>Rickettsiales</taxon>
        <taxon>Rickettsiaceae</taxon>
        <taxon>Rickettsieae</taxon>
        <taxon>Rickettsia</taxon>
        <taxon>spotted fever group</taxon>
    </lineage>
</organism>